<accession>B6J2D9</accession>
<gene>
    <name evidence="1" type="primary">atpG</name>
    <name type="ordered locus">CbuG_0055</name>
</gene>
<sequence>MSKAREIRTKIASIKNTQKITRAMELVAASKMRKAQDRMAMSRPYASKIRKVISHVAASHAEYPHPYLQQRENIKRVGYIIVTTDRGLCGGLNVNLFRTAIADMKKWQADNIGMDLCVIGRKGEAFFRRYGGNVLAVADHLGDAPEVQDIIGIVKVMLDQYDKQQIDAIYIATNEFVNTMVQKPLVRQLLPLKTDEEEVEGGYWDYIYEPDESKDLLEMLLVRYIESQVYQAVIENIACEQSARMVAMKNATENAGQLIDELRLIYNKARQAGITQEIAEIVAGAAAVE</sequence>
<name>ATPG_COXB2</name>
<organism>
    <name type="scientific">Coxiella burnetii (strain CbuG_Q212)</name>
    <name type="common">Coxiella burnetii (strain Q212)</name>
    <dbReference type="NCBI Taxonomy" id="434923"/>
    <lineage>
        <taxon>Bacteria</taxon>
        <taxon>Pseudomonadati</taxon>
        <taxon>Pseudomonadota</taxon>
        <taxon>Gammaproteobacteria</taxon>
        <taxon>Legionellales</taxon>
        <taxon>Coxiellaceae</taxon>
        <taxon>Coxiella</taxon>
    </lineage>
</organism>
<comment type="function">
    <text evidence="1">Produces ATP from ADP in the presence of a proton gradient across the membrane. The gamma chain is believed to be important in regulating ATPase activity and the flow of protons through the CF(0) complex.</text>
</comment>
<comment type="subunit">
    <text evidence="1">F-type ATPases have 2 components, CF(1) - the catalytic core - and CF(0) - the membrane proton channel. CF(1) has five subunits: alpha(3), beta(3), gamma(1), delta(1), epsilon(1). CF(0) has three main subunits: a, b and c.</text>
</comment>
<comment type="subcellular location">
    <subcellularLocation>
        <location evidence="1">Cell inner membrane</location>
        <topology evidence="1">Peripheral membrane protein</topology>
    </subcellularLocation>
</comment>
<comment type="similarity">
    <text evidence="1">Belongs to the ATPase gamma chain family.</text>
</comment>
<keyword id="KW-0066">ATP synthesis</keyword>
<keyword id="KW-0997">Cell inner membrane</keyword>
<keyword id="KW-1003">Cell membrane</keyword>
<keyword id="KW-0139">CF(1)</keyword>
<keyword id="KW-0375">Hydrogen ion transport</keyword>
<keyword id="KW-0406">Ion transport</keyword>
<keyword id="KW-0472">Membrane</keyword>
<keyword id="KW-0813">Transport</keyword>
<proteinExistence type="inferred from homology"/>
<reference key="1">
    <citation type="journal article" date="2009" name="Infect. Immun.">
        <title>Comparative genomics reveal extensive transposon-mediated genomic plasticity and diversity among potential effector proteins within the genus Coxiella.</title>
        <authorList>
            <person name="Beare P.A."/>
            <person name="Unsworth N."/>
            <person name="Andoh M."/>
            <person name="Voth D.E."/>
            <person name="Omsland A."/>
            <person name="Gilk S.D."/>
            <person name="Williams K.P."/>
            <person name="Sobral B.W."/>
            <person name="Kupko J.J. III"/>
            <person name="Porcella S.F."/>
            <person name="Samuel J.E."/>
            <person name="Heinzen R.A."/>
        </authorList>
    </citation>
    <scope>NUCLEOTIDE SEQUENCE [LARGE SCALE GENOMIC DNA]</scope>
    <source>
        <strain>CbuG_Q212</strain>
    </source>
</reference>
<feature type="chain" id="PRO_1000134132" description="ATP synthase gamma chain">
    <location>
        <begin position="1"/>
        <end position="289"/>
    </location>
</feature>
<evidence type="ECO:0000255" key="1">
    <source>
        <dbReference type="HAMAP-Rule" id="MF_00815"/>
    </source>
</evidence>
<protein>
    <recommendedName>
        <fullName evidence="1">ATP synthase gamma chain</fullName>
    </recommendedName>
    <alternativeName>
        <fullName evidence="1">ATP synthase F1 sector gamma subunit</fullName>
    </alternativeName>
    <alternativeName>
        <fullName evidence="1">F-ATPase gamma subunit</fullName>
    </alternativeName>
</protein>
<dbReference type="EMBL" id="CP001019">
    <property type="protein sequence ID" value="ACJ17513.1"/>
    <property type="molecule type" value="Genomic_DNA"/>
</dbReference>
<dbReference type="RefSeq" id="WP_012569562.1">
    <property type="nucleotide sequence ID" value="NC_011527.1"/>
</dbReference>
<dbReference type="SMR" id="B6J2D9"/>
<dbReference type="KEGG" id="cbg:CbuG_0055"/>
<dbReference type="HOGENOM" id="CLU_050669_0_1_6"/>
<dbReference type="GO" id="GO:0005886">
    <property type="term" value="C:plasma membrane"/>
    <property type="evidence" value="ECO:0007669"/>
    <property type="project" value="UniProtKB-SubCell"/>
</dbReference>
<dbReference type="GO" id="GO:0045259">
    <property type="term" value="C:proton-transporting ATP synthase complex"/>
    <property type="evidence" value="ECO:0007669"/>
    <property type="project" value="UniProtKB-KW"/>
</dbReference>
<dbReference type="GO" id="GO:0005524">
    <property type="term" value="F:ATP binding"/>
    <property type="evidence" value="ECO:0007669"/>
    <property type="project" value="UniProtKB-UniRule"/>
</dbReference>
<dbReference type="GO" id="GO:0046933">
    <property type="term" value="F:proton-transporting ATP synthase activity, rotational mechanism"/>
    <property type="evidence" value="ECO:0007669"/>
    <property type="project" value="UniProtKB-UniRule"/>
</dbReference>
<dbReference type="GO" id="GO:0042777">
    <property type="term" value="P:proton motive force-driven plasma membrane ATP synthesis"/>
    <property type="evidence" value="ECO:0007669"/>
    <property type="project" value="UniProtKB-UniRule"/>
</dbReference>
<dbReference type="CDD" id="cd12151">
    <property type="entry name" value="F1-ATPase_gamma"/>
    <property type="match status" value="1"/>
</dbReference>
<dbReference type="FunFam" id="1.10.287.80:FF:000005">
    <property type="entry name" value="ATP synthase gamma chain"/>
    <property type="match status" value="1"/>
</dbReference>
<dbReference type="FunFam" id="3.40.1380.10:FF:000006">
    <property type="entry name" value="ATP synthase gamma chain"/>
    <property type="match status" value="1"/>
</dbReference>
<dbReference type="Gene3D" id="3.40.1380.10">
    <property type="match status" value="1"/>
</dbReference>
<dbReference type="Gene3D" id="1.10.287.80">
    <property type="entry name" value="ATP synthase, gamma subunit, helix hairpin domain"/>
    <property type="match status" value="1"/>
</dbReference>
<dbReference type="HAMAP" id="MF_00815">
    <property type="entry name" value="ATP_synth_gamma_bact"/>
    <property type="match status" value="1"/>
</dbReference>
<dbReference type="InterPro" id="IPR035968">
    <property type="entry name" value="ATP_synth_F1_ATPase_gsu"/>
</dbReference>
<dbReference type="InterPro" id="IPR000131">
    <property type="entry name" value="ATP_synth_F1_gsu"/>
</dbReference>
<dbReference type="InterPro" id="IPR023632">
    <property type="entry name" value="ATP_synth_F1_gsu_CS"/>
</dbReference>
<dbReference type="NCBIfam" id="TIGR01146">
    <property type="entry name" value="ATPsyn_F1gamma"/>
    <property type="match status" value="1"/>
</dbReference>
<dbReference type="NCBIfam" id="NF004144">
    <property type="entry name" value="PRK05621.1-1"/>
    <property type="match status" value="1"/>
</dbReference>
<dbReference type="PANTHER" id="PTHR11693">
    <property type="entry name" value="ATP SYNTHASE GAMMA CHAIN"/>
    <property type="match status" value="1"/>
</dbReference>
<dbReference type="PANTHER" id="PTHR11693:SF22">
    <property type="entry name" value="ATP SYNTHASE SUBUNIT GAMMA, MITOCHONDRIAL"/>
    <property type="match status" value="1"/>
</dbReference>
<dbReference type="Pfam" id="PF00231">
    <property type="entry name" value="ATP-synt"/>
    <property type="match status" value="1"/>
</dbReference>
<dbReference type="PRINTS" id="PR00126">
    <property type="entry name" value="ATPASEGAMMA"/>
</dbReference>
<dbReference type="SUPFAM" id="SSF52943">
    <property type="entry name" value="ATP synthase (F1-ATPase), gamma subunit"/>
    <property type="match status" value="1"/>
</dbReference>
<dbReference type="PROSITE" id="PS00153">
    <property type="entry name" value="ATPASE_GAMMA"/>
    <property type="match status" value="1"/>
</dbReference>